<sequence length="138" mass="15852">MMTIRPTKSTDFEVFTPAHHDILEAKAAGIEPSFPDASECVTLSLYGFPLAIGGNCGDQCWFVTSDQVWRLSGKAKRKFRKLIMEYRDKMLEKYDTLWNYVWVGNTSHIRFLKTIGAVFHEEYTRDGQFQLFTITKGG</sequence>
<accession>P03723</accession>
<feature type="chain" id="PRO_0000106527" description="Probable scaffold protein gp13">
    <location>
        <begin position="1"/>
        <end position="138"/>
    </location>
</feature>
<protein>
    <recommendedName>
        <fullName>Probable scaffold protein gp13</fullName>
    </recommendedName>
    <alternativeName>
        <fullName>Gene product 13</fullName>
        <shortName>Gp13</shortName>
    </alternativeName>
</protein>
<dbReference type="EMBL" id="V01146">
    <property type="protein sequence ID" value="CAA24431.1"/>
    <property type="molecule type" value="Genomic_DNA"/>
</dbReference>
<dbReference type="PIR" id="A04349">
    <property type="entry name" value="NIBPA7"/>
</dbReference>
<dbReference type="RefSeq" id="NP_042001.1">
    <property type="nucleotide sequence ID" value="NC_001604.1"/>
</dbReference>
<dbReference type="SMR" id="P03723"/>
<dbReference type="KEGG" id="vg:1261025"/>
<dbReference type="OrthoDB" id="12720at10239"/>
<dbReference type="Proteomes" id="UP000000840">
    <property type="component" value="Genome"/>
</dbReference>
<dbReference type="InterPro" id="IPR020335">
    <property type="entry name" value="Phage_T7_Gp13"/>
</dbReference>
<dbReference type="Pfam" id="PF11090">
    <property type="entry name" value="Phage_T7_Gp13"/>
    <property type="match status" value="1"/>
</dbReference>
<reference key="1">
    <citation type="journal article" date="1983" name="J. Mol. Biol.">
        <title>Complete nucleotide sequence of bacteriophage T7 DNA and the locations of T7 genetic elements.</title>
        <authorList>
            <person name="Dunn J.J."/>
            <person name="Studier F.W."/>
        </authorList>
    </citation>
    <scope>NUCLEOTIDE SEQUENCE [LARGE SCALE GENOMIC DNA]</scope>
</reference>
<reference key="2">
    <citation type="journal article" date="2005" name="Virology">
        <title>Changes in bacteriophage T7 virion structure at the initiation of infection.</title>
        <authorList>
            <person name="Kemp P."/>
            <person name="Garcia L.R."/>
            <person name="Molineux I.J."/>
        </authorList>
    </citation>
    <scope>FUNCTION</scope>
</reference>
<organismHost>
    <name type="scientific">Escherichia coli</name>
    <dbReference type="NCBI Taxonomy" id="562"/>
</organismHost>
<keyword id="KW-1185">Reference proteome</keyword>
<comment type="function">
    <text evidence="1">May act as an organizer for the correct association of several proteins in the surrounding of the head-tail connector protein gp8.</text>
</comment>
<gene>
    <name type="ordered locus">13</name>
</gene>
<organism>
    <name type="scientific">Escherichia phage T7</name>
    <name type="common">Bacteriophage T7</name>
    <dbReference type="NCBI Taxonomy" id="10760"/>
    <lineage>
        <taxon>Viruses</taxon>
        <taxon>Duplodnaviria</taxon>
        <taxon>Heunggongvirae</taxon>
        <taxon>Uroviricota</taxon>
        <taxon>Caudoviricetes</taxon>
        <taxon>Autographiviridae</taxon>
        <taxon>Studiervirinae</taxon>
        <taxon>Teseptimavirus</taxon>
        <taxon>Teseptimavirus T7</taxon>
    </lineage>
</organism>
<name>GP13_BPT7</name>
<proteinExistence type="predicted"/>
<evidence type="ECO:0000269" key="1">
    <source>
    </source>
</evidence>